<feature type="transit peptide" description="Mitochondrion" evidence="4">
    <location>
        <begin position="1"/>
        <end position="39"/>
    </location>
</feature>
<feature type="chain" id="PRO_0000014420" description="Isocitrate dehydrogenase [NADP], mitochondrial">
    <location>
        <begin position="40"/>
        <end position="452"/>
    </location>
</feature>
<feature type="binding site" evidence="1">
    <location>
        <begin position="115"/>
        <end position="117"/>
    </location>
    <ligand>
        <name>NADP(+)</name>
        <dbReference type="ChEBI" id="CHEBI:58349"/>
    </ligand>
</feature>
<feature type="binding site" evidence="2">
    <location>
        <position position="117"/>
    </location>
    <ligand>
        <name>D-threo-isocitrate</name>
        <dbReference type="ChEBI" id="CHEBI:15562"/>
    </ligand>
</feature>
<feature type="binding site" evidence="1">
    <location>
        <position position="122"/>
    </location>
    <ligand>
        <name>NADP(+)</name>
        <dbReference type="ChEBI" id="CHEBI:58349"/>
    </ligand>
</feature>
<feature type="binding site" evidence="2">
    <location>
        <begin position="134"/>
        <end position="140"/>
    </location>
    <ligand>
        <name>D-threo-isocitrate</name>
        <dbReference type="ChEBI" id="CHEBI:15562"/>
    </ligand>
</feature>
<feature type="binding site" evidence="2">
    <location>
        <position position="149"/>
    </location>
    <ligand>
        <name>D-threo-isocitrate</name>
        <dbReference type="ChEBI" id="CHEBI:15562"/>
    </ligand>
</feature>
<feature type="binding site" evidence="2">
    <location>
        <position position="172"/>
    </location>
    <ligand>
        <name>D-threo-isocitrate</name>
        <dbReference type="ChEBI" id="CHEBI:15562"/>
    </ligand>
</feature>
<feature type="binding site" evidence="2">
    <location>
        <position position="291"/>
    </location>
    <ligand>
        <name>Mn(2+)</name>
        <dbReference type="ChEBI" id="CHEBI:29035"/>
    </ligand>
</feature>
<feature type="binding site" evidence="1">
    <location>
        <position position="299"/>
    </location>
    <ligand>
        <name>NADP(+)</name>
        <dbReference type="ChEBI" id="CHEBI:58349"/>
    </ligand>
</feature>
<feature type="binding site" evidence="2">
    <location>
        <position position="314"/>
    </location>
    <ligand>
        <name>Mn(2+)</name>
        <dbReference type="ChEBI" id="CHEBI:29035"/>
    </ligand>
</feature>
<feature type="binding site" evidence="1">
    <location>
        <begin position="349"/>
        <end position="354"/>
    </location>
    <ligand>
        <name>NADP(+)</name>
        <dbReference type="ChEBI" id="CHEBI:58349"/>
    </ligand>
</feature>
<feature type="binding site" evidence="1">
    <location>
        <position position="367"/>
    </location>
    <ligand>
        <name>NADP(+)</name>
        <dbReference type="ChEBI" id="CHEBI:58349"/>
    </ligand>
</feature>
<feature type="site" description="Critical for catalysis" evidence="2">
    <location>
        <position position="179"/>
    </location>
</feature>
<feature type="site" description="Critical for catalysis" evidence="2">
    <location>
        <position position="251"/>
    </location>
</feature>
<feature type="modified residue" description="N6-acetyllysine" evidence="3">
    <location>
        <position position="45"/>
    </location>
</feature>
<feature type="modified residue" description="N6-acetyllysine" evidence="3">
    <location>
        <position position="48"/>
    </location>
</feature>
<feature type="modified residue" description="N6-acetyllysine" evidence="13">
    <location>
        <position position="67"/>
    </location>
</feature>
<feature type="modified residue" description="N6-acetyllysine" evidence="3">
    <location>
        <position position="69"/>
    </location>
</feature>
<feature type="modified residue" description="N6-acetyllysine; alternate" evidence="3">
    <location>
        <position position="80"/>
    </location>
</feature>
<feature type="modified residue" description="N6-succinyllysine; alternate" evidence="3">
    <location>
        <position position="80"/>
    </location>
</feature>
<feature type="modified residue" description="N6-acetyllysine; alternate" evidence="13">
    <location>
        <position position="106"/>
    </location>
</feature>
<feature type="modified residue" description="N6-succinyllysine; alternate" evidence="3">
    <location>
        <position position="106"/>
    </location>
</feature>
<feature type="modified residue" description="N6-acetyllysine" evidence="13">
    <location>
        <position position="155"/>
    </location>
</feature>
<feature type="modified residue" description="N6-acetyllysine; alternate" evidence="13">
    <location>
        <position position="166"/>
    </location>
</feature>
<feature type="modified residue" description="N6-succinyllysine; alternate" evidence="3">
    <location>
        <position position="166"/>
    </location>
</feature>
<feature type="modified residue" description="N6-acetyllysine; alternate" evidence="13">
    <location>
        <position position="180"/>
    </location>
</feature>
<feature type="modified residue" description="N6-succinyllysine; alternate" evidence="3">
    <location>
        <position position="180"/>
    </location>
</feature>
<feature type="modified residue" description="N6-acetyllysine; alternate" evidence="3">
    <location>
        <position position="193"/>
    </location>
</feature>
<feature type="modified residue" description="N6-succinyllysine; alternate" evidence="3">
    <location>
        <position position="193"/>
    </location>
</feature>
<feature type="modified residue" description="N6-acetyllysine" evidence="3">
    <location>
        <position position="199"/>
    </location>
</feature>
<feature type="modified residue" description="N6-acetyllysine; alternate" evidence="13">
    <location>
        <position position="256"/>
    </location>
</feature>
<feature type="modified residue" description="N6-succinyllysine; alternate" evidence="3">
    <location>
        <position position="256"/>
    </location>
</feature>
<feature type="modified residue" description="N6-acetyllysine" evidence="13">
    <location>
        <position position="263"/>
    </location>
</feature>
<feature type="modified residue" description="N6-acetyllysine" evidence="13">
    <location>
        <position position="272"/>
    </location>
</feature>
<feature type="modified residue" description="N6-acetyllysine" evidence="13">
    <location>
        <position position="275"/>
    </location>
</feature>
<feature type="modified residue" description="N6-acetyllysine" evidence="3">
    <location>
        <position position="280"/>
    </location>
</feature>
<feature type="modified residue" description="N6-acetyllysine; alternate" evidence="13">
    <location>
        <position position="282"/>
    </location>
</feature>
<feature type="modified residue" description="N6-succinyllysine; alternate" evidence="3">
    <location>
        <position position="282"/>
    </location>
</feature>
<feature type="modified residue" description="N6-acetyllysine; alternate" evidence="3">
    <location>
        <position position="384"/>
    </location>
</feature>
<feature type="modified residue" description="N6-succinyllysine; alternate" evidence="3">
    <location>
        <position position="384"/>
    </location>
</feature>
<feature type="modified residue" description="N6-acetyllysine" evidence="3">
    <location>
        <position position="400"/>
    </location>
</feature>
<feature type="modified residue" description="N6-acetyllysine" evidence="7">
    <location>
        <position position="413"/>
    </location>
</feature>
<feature type="modified residue" description="N6-acetyllysine" evidence="13">
    <location>
        <position position="442"/>
    </location>
</feature>
<feature type="splice variant" id="VSP_056278" description="In isoform 2." evidence="10">
    <location>
        <begin position="1"/>
        <end position="52"/>
    </location>
</feature>
<feature type="sequence variant" id="VAR_065174" description="In D2HGA2; dbSNP:rs267606870." evidence="6">
    <original>R</original>
    <variation>G</variation>
    <location>
        <position position="140"/>
    </location>
</feature>
<feature type="sequence variant" id="VAR_065175" description="In D2HGA2; dbSNP:rs121913502." evidence="6">
    <original>R</original>
    <variation>Q</variation>
    <location>
        <position position="140"/>
    </location>
</feature>
<feature type="sequence variant" id="VAR_073181" description="In GLM; somatic mutation; dbSNP:rs2151549649." evidence="8">
    <original>P</original>
    <variation>L</variation>
    <location>
        <position position="158"/>
    </location>
</feature>
<feature type="sequence variant" id="VAR_073182" description="In GLM; somatic mutation; dbSNP:rs1382680247." evidence="8">
    <original>P</original>
    <variation>S</variation>
    <location>
        <position position="162"/>
    </location>
</feature>
<feature type="sequence variant" id="VAR_073183" description="In GLM; somatic mutation; reduces enzymatic activity; dbSNP:rs1057519906." evidence="5">
    <original>R</original>
    <variation>G</variation>
    <location>
        <position position="172"/>
    </location>
</feature>
<feature type="sequence variant" id="VAR_073184" description="In GLM; somatic mutation; reduces enzymatic activity; dbSNP:rs121913503." evidence="5 8">
    <original>R</original>
    <variation>K</variation>
    <location>
        <position position="172"/>
    </location>
</feature>
<feature type="sequence variant" id="VAR_073185" description="In GLM; somatic mutation; reduces enzymatic activity; dbSNP:rs121913503." evidence="5">
    <original>R</original>
    <variation>M</variation>
    <location>
        <position position="172"/>
    </location>
</feature>
<feature type="sequence variant" id="VAR_076512" description="Found in patients with cartilagenous tumors; dbSNP:rs1057519736." evidence="9">
    <original>R</original>
    <variation>S</variation>
    <location>
        <position position="172"/>
    </location>
</feature>
<feature type="sequence variant" id="VAR_076513" description="Found in patients with cartilagenous tumors; dbSNP:rs121913503." evidence="9">
    <original>R</original>
    <variation>T</variation>
    <location>
        <position position="172"/>
    </location>
</feature>
<feature type="sequence variant" id="VAR_076514" description="Found in patients with cartilagenous tumors; dbSNP:rs1057519906." evidence="9">
    <original>R</original>
    <variation>W</variation>
    <location>
        <position position="172"/>
    </location>
</feature>
<feature type="mutagenesis site" description="44-fold loss in activity." evidence="7">
    <original>K</original>
    <variation>A</variation>
    <location>
        <position position="413"/>
    </location>
</feature>
<feature type="mutagenesis site" description="20-fold decrease in Vmax." evidence="7">
    <original>K</original>
    <variation>Q</variation>
    <location>
        <position position="413"/>
    </location>
</feature>
<feature type="mutagenesis site" description="No appreciable difference in Km for isocitrate and NADP." evidence="7">
    <original>K</original>
    <variation>R</variation>
    <location>
        <position position="413"/>
    </location>
</feature>
<feature type="sequence conflict" description="In Ref. 1; CAA49208." evidence="11" ref="1">
    <original>Q</original>
    <variation>H</variation>
    <location>
        <position position="34"/>
    </location>
</feature>
<feature type="sequence conflict" description="In Ref. 1; CAA49208." evidence="11" ref="1">
    <original>T</original>
    <variation>M</variation>
    <location>
        <position position="435"/>
    </location>
</feature>
<feature type="strand" evidence="14">
    <location>
        <begin position="50"/>
        <end position="54"/>
    </location>
</feature>
<feature type="helix" evidence="14">
    <location>
        <begin position="57"/>
        <end position="69"/>
    </location>
</feature>
<feature type="turn" evidence="14">
    <location>
        <begin position="70"/>
        <end position="74"/>
    </location>
</feature>
<feature type="strand" evidence="14">
    <location>
        <begin position="79"/>
        <end position="83"/>
    </location>
</feature>
<feature type="helix" evidence="14">
    <location>
        <begin position="86"/>
        <end position="91"/>
    </location>
</feature>
<feature type="turn" evidence="14">
    <location>
        <begin position="92"/>
        <end position="94"/>
    </location>
</feature>
<feature type="helix" evidence="14">
    <location>
        <begin position="95"/>
        <end position="107"/>
    </location>
</feature>
<feature type="strand" evidence="14">
    <location>
        <begin position="108"/>
        <end position="112"/>
    </location>
</feature>
<feature type="helix" evidence="14">
    <location>
        <begin position="120"/>
        <end position="126"/>
    </location>
</feature>
<feature type="helix" evidence="14">
    <location>
        <begin position="135"/>
        <end position="143"/>
    </location>
</feature>
<feature type="strand" evidence="14">
    <location>
        <begin position="146"/>
        <end position="151"/>
    </location>
</feature>
<feature type="strand" evidence="14">
    <location>
        <begin position="169"/>
        <end position="173"/>
    </location>
</feature>
<feature type="helix" evidence="14">
    <location>
        <begin position="177"/>
        <end position="180"/>
    </location>
</feature>
<feature type="strand" evidence="14">
    <location>
        <begin position="182"/>
        <end position="186"/>
    </location>
</feature>
<feature type="strand" evidence="14">
    <location>
        <begin position="190"/>
        <end position="196"/>
    </location>
</feature>
<feature type="strand" evidence="14">
    <location>
        <begin position="205"/>
        <end position="214"/>
    </location>
</feature>
<feature type="strand" evidence="14">
    <location>
        <begin position="216"/>
        <end position="220"/>
    </location>
</feature>
<feature type="helix" evidence="14">
    <location>
        <begin position="225"/>
        <end position="242"/>
    </location>
</feature>
<feature type="strand" evidence="14">
    <location>
        <begin position="246"/>
        <end position="250"/>
    </location>
</feature>
<feature type="turn" evidence="14">
    <location>
        <begin position="252"/>
        <end position="254"/>
    </location>
</feature>
<feature type="helix" evidence="14">
    <location>
        <begin position="258"/>
        <end position="273"/>
    </location>
</feature>
<feature type="helix" evidence="14">
    <location>
        <begin position="275"/>
        <end position="280"/>
    </location>
</feature>
<feature type="strand" evidence="14">
    <location>
        <begin position="285"/>
        <end position="289"/>
    </location>
</feature>
<feature type="helix" evidence="14">
    <location>
        <begin position="290"/>
        <end position="299"/>
    </location>
</feature>
<feature type="strand" evidence="14">
    <location>
        <begin position="304"/>
        <end position="308"/>
    </location>
</feature>
<feature type="helix" evidence="14">
    <location>
        <begin position="310"/>
        <end position="324"/>
    </location>
</feature>
<feature type="strand" evidence="14">
    <location>
        <begin position="329"/>
        <end position="335"/>
    </location>
</feature>
<feature type="strand" evidence="14">
    <location>
        <begin position="342"/>
        <end position="345"/>
    </location>
</feature>
<feature type="helix" evidence="14">
    <location>
        <begin position="352"/>
        <end position="359"/>
    </location>
</feature>
<feature type="helix" evidence="14">
    <location>
        <begin position="369"/>
        <end position="386"/>
    </location>
</feature>
<feature type="helix" evidence="14">
    <location>
        <begin position="389"/>
        <end position="407"/>
    </location>
</feature>
<feature type="helix" evidence="14">
    <location>
        <begin position="413"/>
        <end position="420"/>
    </location>
</feature>
<feature type="helix" evidence="14">
    <location>
        <begin position="422"/>
        <end position="424"/>
    </location>
</feature>
<feature type="turn" evidence="14">
    <location>
        <begin position="427"/>
        <end position="429"/>
    </location>
</feature>
<feature type="helix" evidence="14">
    <location>
        <begin position="434"/>
        <end position="449"/>
    </location>
</feature>
<dbReference type="EC" id="1.1.1.42" evidence="7 12"/>
<dbReference type="EMBL" id="X69433">
    <property type="protein sequence ID" value="CAA49208.1"/>
    <property type="molecule type" value="mRNA"/>
</dbReference>
<dbReference type="EMBL" id="AK294148">
    <property type="protein sequence ID" value="BAG57473.1"/>
    <property type="molecule type" value="mRNA"/>
</dbReference>
<dbReference type="EMBL" id="AK312627">
    <property type="protein sequence ID" value="BAG35513.1"/>
    <property type="molecule type" value="mRNA"/>
</dbReference>
<dbReference type="EMBL" id="AK316388">
    <property type="protein sequence ID" value="BAH14759.1"/>
    <property type="molecule type" value="mRNA"/>
</dbReference>
<dbReference type="EMBL" id="AC087284">
    <property type="status" value="NOT_ANNOTATED_CDS"/>
    <property type="molecule type" value="Genomic_DNA"/>
</dbReference>
<dbReference type="EMBL" id="AC092769">
    <property type="status" value="NOT_ANNOTATED_CDS"/>
    <property type="molecule type" value="Genomic_DNA"/>
</dbReference>
<dbReference type="EMBL" id="CH471101">
    <property type="protein sequence ID" value="EAX02082.1"/>
    <property type="molecule type" value="Genomic_DNA"/>
</dbReference>
<dbReference type="EMBL" id="BC009244">
    <property type="protein sequence ID" value="AAH09244.1"/>
    <property type="molecule type" value="mRNA"/>
</dbReference>
<dbReference type="EMBL" id="BC071828">
    <property type="protein sequence ID" value="AAH71828.1"/>
    <property type="molecule type" value="mRNA"/>
</dbReference>
<dbReference type="CCDS" id="CCDS10359.1">
    <molecule id="P48735-1"/>
</dbReference>
<dbReference type="CCDS" id="CCDS76792.1">
    <molecule id="P48735-2"/>
</dbReference>
<dbReference type="PIR" id="S57499">
    <property type="entry name" value="S57499"/>
</dbReference>
<dbReference type="RefSeq" id="NP_001276839.1">
    <molecule id="P48735-2"/>
    <property type="nucleotide sequence ID" value="NM_001289910.1"/>
</dbReference>
<dbReference type="RefSeq" id="NP_001277043.1">
    <property type="nucleotide sequence ID" value="NM_001290114.1"/>
</dbReference>
<dbReference type="RefSeq" id="NP_002159.2">
    <molecule id="P48735-1"/>
    <property type="nucleotide sequence ID" value="NM_002168.3"/>
</dbReference>
<dbReference type="PDB" id="4JA8">
    <property type="method" value="X-ray"/>
    <property type="resolution" value="1.55 A"/>
    <property type="chains" value="A/B=41-452"/>
</dbReference>
<dbReference type="PDB" id="5GIS">
    <property type="method" value="X-ray"/>
    <property type="resolution" value="1.93 A"/>
    <property type="chains" value="C=165-180"/>
</dbReference>
<dbReference type="PDB" id="5I95">
    <property type="method" value="X-ray"/>
    <property type="resolution" value="1.54 A"/>
    <property type="chains" value="A=40-452"/>
</dbReference>
<dbReference type="PDB" id="5I96">
    <property type="method" value="X-ray"/>
    <property type="resolution" value="1.55 A"/>
    <property type="chains" value="A/B=1-452"/>
</dbReference>
<dbReference type="PDB" id="5SVN">
    <property type="method" value="X-ray"/>
    <property type="resolution" value="2.10 A"/>
    <property type="chains" value="A/B=40-452"/>
</dbReference>
<dbReference type="PDB" id="5SVO">
    <property type="method" value="X-ray"/>
    <property type="resolution" value="1.87 A"/>
    <property type="chains" value="A/B=40-452"/>
</dbReference>
<dbReference type="PDB" id="6ADI">
    <property type="method" value="X-ray"/>
    <property type="resolution" value="1.97 A"/>
    <property type="chains" value="A/B=41-452"/>
</dbReference>
<dbReference type="PDB" id="6UJ7">
    <property type="method" value="X-ray"/>
    <property type="resolution" value="1.90 A"/>
    <property type="chains" value="C/F=134-143"/>
</dbReference>
<dbReference type="PDB" id="6UJ8">
    <property type="method" value="X-ray"/>
    <property type="resolution" value="2.25 A"/>
    <property type="chains" value="C/F=134-143"/>
</dbReference>
<dbReference type="PDB" id="6UJ9">
    <property type="method" value="X-ray"/>
    <property type="resolution" value="2.90 A"/>
    <property type="chains" value="C=134-143"/>
</dbReference>
<dbReference type="PDB" id="6VFZ">
    <property type="method" value="X-ray"/>
    <property type="resolution" value="1.99 A"/>
    <property type="chains" value="A/B=1-452"/>
</dbReference>
<dbReference type="PDBsum" id="4JA8"/>
<dbReference type="PDBsum" id="5GIS"/>
<dbReference type="PDBsum" id="5I95"/>
<dbReference type="PDBsum" id="5I96"/>
<dbReference type="PDBsum" id="5SVN"/>
<dbReference type="PDBsum" id="5SVO"/>
<dbReference type="PDBsum" id="6ADI"/>
<dbReference type="PDBsum" id="6UJ7"/>
<dbReference type="PDBsum" id="6UJ8"/>
<dbReference type="PDBsum" id="6UJ9"/>
<dbReference type="PDBsum" id="6VFZ"/>
<dbReference type="SMR" id="P48735"/>
<dbReference type="BioGRID" id="109644">
    <property type="interactions" value="274"/>
</dbReference>
<dbReference type="CORUM" id="P48735"/>
<dbReference type="DIP" id="DIP-61416N"/>
<dbReference type="FunCoup" id="P48735">
    <property type="interactions" value="1532"/>
</dbReference>
<dbReference type="IntAct" id="P48735">
    <property type="interactions" value="66"/>
</dbReference>
<dbReference type="MINT" id="P48735"/>
<dbReference type="STRING" id="9606.ENSP00000331897"/>
<dbReference type="BindingDB" id="P48735"/>
<dbReference type="ChEMBL" id="CHEMBL3991501"/>
<dbReference type="DrugBank" id="DB13874">
    <property type="generic name" value="Enasidenib"/>
</dbReference>
<dbReference type="DrugBank" id="DB01727">
    <property type="generic name" value="Isocitric Acid"/>
</dbReference>
<dbReference type="DrugBank" id="DB17097">
    <property type="generic name" value="Vorasidenib"/>
</dbReference>
<dbReference type="DrugCentral" id="P48735"/>
<dbReference type="GuidetoPHARMACOLOGY" id="2885"/>
<dbReference type="CarbonylDB" id="P48735"/>
<dbReference type="GlyGen" id="P48735">
    <property type="glycosylation" value="1 site, 1 O-linked glycan (1 site)"/>
</dbReference>
<dbReference type="iPTMnet" id="P48735"/>
<dbReference type="MetOSite" id="P48735"/>
<dbReference type="PhosphoSitePlus" id="P48735"/>
<dbReference type="SwissPalm" id="P48735"/>
<dbReference type="BioMuta" id="IDH2"/>
<dbReference type="DMDM" id="20141568"/>
<dbReference type="OGP" id="P48735"/>
<dbReference type="CPTAC" id="CPTAC-221"/>
<dbReference type="CPTAC" id="CPTAC-222"/>
<dbReference type="CPTAC" id="CPTAC-2742"/>
<dbReference type="CPTAC" id="CPTAC-2743"/>
<dbReference type="jPOST" id="P48735"/>
<dbReference type="MassIVE" id="P48735"/>
<dbReference type="PaxDb" id="9606-ENSP00000331897"/>
<dbReference type="PeptideAtlas" id="P48735"/>
<dbReference type="ProteomicsDB" id="4054"/>
<dbReference type="ProteomicsDB" id="55932">
    <molecule id="P48735-1"/>
</dbReference>
<dbReference type="Pumba" id="P48735"/>
<dbReference type="ABCD" id="P48735">
    <property type="antibodies" value="1 sequenced antibody"/>
</dbReference>
<dbReference type="Antibodypedia" id="15858">
    <property type="antibodies" value="480 antibodies from 44 providers"/>
</dbReference>
<dbReference type="DNASU" id="3418"/>
<dbReference type="Ensembl" id="ENST00000330062.8">
    <molecule id="P48735-1"/>
    <property type="protein sequence ID" value="ENSP00000331897.4"/>
    <property type="gene ID" value="ENSG00000182054.10"/>
</dbReference>
<dbReference type="Ensembl" id="ENST00000540499.2">
    <molecule id="P48735-2"/>
    <property type="protein sequence ID" value="ENSP00000446147.2"/>
    <property type="gene ID" value="ENSG00000182054.10"/>
</dbReference>
<dbReference type="GeneID" id="3418"/>
<dbReference type="KEGG" id="hsa:3418"/>
<dbReference type="MANE-Select" id="ENST00000330062.8">
    <property type="protein sequence ID" value="ENSP00000331897.4"/>
    <property type="RefSeq nucleotide sequence ID" value="NM_002168.4"/>
    <property type="RefSeq protein sequence ID" value="NP_002159.2"/>
</dbReference>
<dbReference type="UCSC" id="uc002box.4">
    <molecule id="P48735-1"/>
    <property type="organism name" value="human"/>
</dbReference>
<dbReference type="AGR" id="HGNC:5383"/>
<dbReference type="CTD" id="3418"/>
<dbReference type="DisGeNET" id="3418"/>
<dbReference type="GeneCards" id="IDH2"/>
<dbReference type="HGNC" id="HGNC:5383">
    <property type="gene designation" value="IDH2"/>
</dbReference>
<dbReference type="HPA" id="ENSG00000182054">
    <property type="expression patterns" value="Group enriched (heart muscle, skeletal muscle, tongue)"/>
</dbReference>
<dbReference type="MalaCards" id="IDH2"/>
<dbReference type="MIM" id="137800">
    <property type="type" value="phenotype"/>
</dbReference>
<dbReference type="MIM" id="147650">
    <property type="type" value="gene"/>
</dbReference>
<dbReference type="MIM" id="613657">
    <property type="type" value="phenotype"/>
</dbReference>
<dbReference type="neXtProt" id="NX_P48735"/>
<dbReference type="OpenTargets" id="ENSG00000182054"/>
<dbReference type="Orphanet" id="86845">
    <property type="disease" value="Acute myeloid leukaemia with myelodysplasia-related features"/>
</dbReference>
<dbReference type="Orphanet" id="251589">
    <property type="disease" value="Anaplastic astrocytoma"/>
</dbReference>
<dbReference type="Orphanet" id="251663">
    <property type="disease" value="Anaplastic oligoastrocytoma"/>
</dbReference>
<dbReference type="Orphanet" id="251630">
    <property type="disease" value="Anaplastic oligodendroglioma"/>
</dbReference>
<dbReference type="Orphanet" id="79315">
    <property type="disease" value="D-2-hydroxyglutaric aciduria"/>
</dbReference>
<dbReference type="Orphanet" id="251601">
    <property type="disease" value="Fibrillary astrocytoma"/>
</dbReference>
<dbReference type="Orphanet" id="251604">
    <property type="disease" value="Gemistocytic astrocytoma"/>
</dbReference>
<dbReference type="Orphanet" id="163634">
    <property type="disease" value="Maffucci syndrome"/>
</dbReference>
<dbReference type="Orphanet" id="251656">
    <property type="disease" value="Oligoastrocytoma"/>
</dbReference>
<dbReference type="Orphanet" id="251627">
    <property type="disease" value="Oligodendroglioma"/>
</dbReference>
<dbReference type="Orphanet" id="296">
    <property type="disease" value="Ollier disease"/>
</dbReference>
<dbReference type="Orphanet" id="251598">
    <property type="disease" value="Protoplasmic astrocytoma"/>
</dbReference>
<dbReference type="PharmGKB" id="PA29631"/>
<dbReference type="VEuPathDB" id="HostDB:ENSG00000182054"/>
<dbReference type="eggNOG" id="KOG1526">
    <property type="taxonomic scope" value="Eukaryota"/>
</dbReference>
<dbReference type="GeneTree" id="ENSGT00390000012547"/>
<dbReference type="HOGENOM" id="CLU_023296_1_1_1"/>
<dbReference type="InParanoid" id="P48735"/>
<dbReference type="OMA" id="EYPVYNF"/>
<dbReference type="OrthoDB" id="248923at2759"/>
<dbReference type="PAN-GO" id="P48735">
    <property type="GO annotations" value="4 GO annotations based on evolutionary models"/>
</dbReference>
<dbReference type="PhylomeDB" id="P48735"/>
<dbReference type="TreeFam" id="TF300428"/>
<dbReference type="BioCyc" id="MetaCyc:HS00021-MONOMER"/>
<dbReference type="BRENDA" id="1.1.1.42">
    <property type="organism ID" value="2681"/>
</dbReference>
<dbReference type="PathwayCommons" id="P48735"/>
<dbReference type="Reactome" id="R-HSA-2151201">
    <property type="pathway name" value="Transcriptional activation of mitochondrial biogenesis"/>
</dbReference>
<dbReference type="Reactome" id="R-HSA-71403">
    <property type="pathway name" value="Citric acid cycle (TCA cycle)"/>
</dbReference>
<dbReference type="Reactome" id="R-HSA-9837999">
    <property type="pathway name" value="Mitochondrial protein degradation"/>
</dbReference>
<dbReference type="Reactome" id="R-HSA-9854311">
    <property type="pathway name" value="Maturation of TCA enzymes and regulation of TCA cycle"/>
</dbReference>
<dbReference type="SABIO-RK" id="P48735"/>
<dbReference type="SignaLink" id="P48735"/>
<dbReference type="SIGNOR" id="P48735"/>
<dbReference type="BioGRID-ORCS" id="3418">
    <property type="hits" value="13 hits in 1171 CRISPR screens"/>
</dbReference>
<dbReference type="CD-CODE" id="91857CE7">
    <property type="entry name" value="Nucleolus"/>
</dbReference>
<dbReference type="CD-CODE" id="FB4E32DD">
    <property type="entry name" value="Presynaptic clusters and postsynaptic densities"/>
</dbReference>
<dbReference type="ChiTaRS" id="IDH2">
    <property type="organism name" value="human"/>
</dbReference>
<dbReference type="EvolutionaryTrace" id="P48735"/>
<dbReference type="GeneWiki" id="IDH2"/>
<dbReference type="GenomeRNAi" id="3418"/>
<dbReference type="Pharos" id="P48735">
    <property type="development level" value="Tclin"/>
</dbReference>
<dbReference type="PRO" id="PR:P48735"/>
<dbReference type="Proteomes" id="UP000005640">
    <property type="component" value="Chromosome 15"/>
</dbReference>
<dbReference type="RNAct" id="P48735">
    <property type="molecule type" value="protein"/>
</dbReference>
<dbReference type="Bgee" id="ENSG00000182054">
    <property type="expression patterns" value="Expressed in apex of heart and 210 other cell types or tissues"/>
</dbReference>
<dbReference type="ExpressionAtlas" id="P48735">
    <property type="expression patterns" value="baseline and differential"/>
</dbReference>
<dbReference type="GO" id="GO:0005829">
    <property type="term" value="C:cytosol"/>
    <property type="evidence" value="ECO:0007669"/>
    <property type="project" value="Ensembl"/>
</dbReference>
<dbReference type="GO" id="GO:0070062">
    <property type="term" value="C:extracellular exosome"/>
    <property type="evidence" value="ECO:0007005"/>
    <property type="project" value="UniProtKB"/>
</dbReference>
<dbReference type="GO" id="GO:0005759">
    <property type="term" value="C:mitochondrial matrix"/>
    <property type="evidence" value="ECO:0000304"/>
    <property type="project" value="Reactome"/>
</dbReference>
<dbReference type="GO" id="GO:0005739">
    <property type="term" value="C:mitochondrion"/>
    <property type="evidence" value="ECO:0000314"/>
    <property type="project" value="HPA"/>
</dbReference>
<dbReference type="GO" id="GO:0005777">
    <property type="term" value="C:peroxisome"/>
    <property type="evidence" value="ECO:0007669"/>
    <property type="project" value="Ensembl"/>
</dbReference>
<dbReference type="GO" id="GO:0004450">
    <property type="term" value="F:isocitrate dehydrogenase (NADP+) activity"/>
    <property type="evidence" value="ECO:0000314"/>
    <property type="project" value="CACAO"/>
</dbReference>
<dbReference type="GO" id="GO:0000287">
    <property type="term" value="F:magnesium ion binding"/>
    <property type="evidence" value="ECO:0000250"/>
    <property type="project" value="UniProtKB"/>
</dbReference>
<dbReference type="GO" id="GO:0051287">
    <property type="term" value="F:NAD binding"/>
    <property type="evidence" value="ECO:0007669"/>
    <property type="project" value="InterPro"/>
</dbReference>
<dbReference type="GO" id="GO:0006103">
    <property type="term" value="P:2-oxoglutarate metabolic process"/>
    <property type="evidence" value="ECO:0000250"/>
    <property type="project" value="UniProtKB"/>
</dbReference>
<dbReference type="GO" id="GO:0005975">
    <property type="term" value="P:carbohydrate metabolic process"/>
    <property type="evidence" value="ECO:0000303"/>
    <property type="project" value="ProtInc"/>
</dbReference>
<dbReference type="GO" id="GO:0006097">
    <property type="term" value="P:glyoxylate cycle"/>
    <property type="evidence" value="ECO:0007669"/>
    <property type="project" value="UniProtKB-KW"/>
</dbReference>
<dbReference type="GO" id="GO:0006102">
    <property type="term" value="P:isocitrate metabolic process"/>
    <property type="evidence" value="ECO:0000250"/>
    <property type="project" value="UniProtKB"/>
</dbReference>
<dbReference type="GO" id="GO:0006741">
    <property type="term" value="P:NADP biosynthetic process"/>
    <property type="evidence" value="ECO:0007669"/>
    <property type="project" value="Ensembl"/>
</dbReference>
<dbReference type="GO" id="GO:0006739">
    <property type="term" value="P:NADP metabolic process"/>
    <property type="evidence" value="ECO:0000318"/>
    <property type="project" value="GO_Central"/>
</dbReference>
<dbReference type="GO" id="GO:1903976">
    <property type="term" value="P:negative regulation of glial cell migration"/>
    <property type="evidence" value="ECO:0007669"/>
    <property type="project" value="Ensembl"/>
</dbReference>
<dbReference type="GO" id="GO:0060253">
    <property type="term" value="P:negative regulation of glial cell proliferation"/>
    <property type="evidence" value="ECO:0007669"/>
    <property type="project" value="Ensembl"/>
</dbReference>
<dbReference type="GO" id="GO:1904465">
    <property type="term" value="P:negative regulation of matrix metallopeptidase secretion"/>
    <property type="evidence" value="ECO:0007669"/>
    <property type="project" value="Ensembl"/>
</dbReference>
<dbReference type="GO" id="GO:0006099">
    <property type="term" value="P:tricarboxylic acid cycle"/>
    <property type="evidence" value="ECO:0007669"/>
    <property type="project" value="UniProtKB-KW"/>
</dbReference>
<dbReference type="FunFam" id="3.40.718.10:FF:000002">
    <property type="entry name" value="Isocitrate dehydrogenase [NADP]"/>
    <property type="match status" value="1"/>
</dbReference>
<dbReference type="Gene3D" id="3.40.718.10">
    <property type="entry name" value="Isopropylmalate Dehydrogenase"/>
    <property type="match status" value="1"/>
</dbReference>
<dbReference type="InterPro" id="IPR019818">
    <property type="entry name" value="IsoCit/isopropylmalate_DH_CS"/>
</dbReference>
<dbReference type="InterPro" id="IPR004790">
    <property type="entry name" value="Isocitrate_DH_NADP"/>
</dbReference>
<dbReference type="InterPro" id="IPR024084">
    <property type="entry name" value="IsoPropMal-DH-like_dom"/>
</dbReference>
<dbReference type="NCBIfam" id="TIGR00127">
    <property type="entry name" value="nadp_idh_euk"/>
    <property type="match status" value="1"/>
</dbReference>
<dbReference type="NCBIfam" id="NF006156">
    <property type="entry name" value="PRK08299.1"/>
    <property type="match status" value="1"/>
</dbReference>
<dbReference type="PANTHER" id="PTHR11822:SF21">
    <property type="entry name" value="ISOCITRATE DEHYDROGENASE [NADP], MITOCHONDRIAL"/>
    <property type="match status" value="1"/>
</dbReference>
<dbReference type="PANTHER" id="PTHR11822">
    <property type="entry name" value="NADP-SPECIFIC ISOCITRATE DEHYDROGENASE"/>
    <property type="match status" value="1"/>
</dbReference>
<dbReference type="Pfam" id="PF00180">
    <property type="entry name" value="Iso_dh"/>
    <property type="match status" value="1"/>
</dbReference>
<dbReference type="PIRSF" id="PIRSF000108">
    <property type="entry name" value="IDH_NADP"/>
    <property type="match status" value="1"/>
</dbReference>
<dbReference type="SMART" id="SM01329">
    <property type="entry name" value="Iso_dh"/>
    <property type="match status" value="1"/>
</dbReference>
<dbReference type="SUPFAM" id="SSF53659">
    <property type="entry name" value="Isocitrate/Isopropylmalate dehydrogenase-like"/>
    <property type="match status" value="1"/>
</dbReference>
<dbReference type="PROSITE" id="PS00470">
    <property type="entry name" value="IDH_IMDH"/>
    <property type="match status" value="1"/>
</dbReference>
<proteinExistence type="evidence at protein level"/>
<evidence type="ECO:0000250" key="1">
    <source>
        <dbReference type="UniProtKB" id="O75874"/>
    </source>
</evidence>
<evidence type="ECO:0000250" key="2">
    <source>
        <dbReference type="UniProtKB" id="P33198"/>
    </source>
</evidence>
<evidence type="ECO:0000250" key="3">
    <source>
        <dbReference type="UniProtKB" id="P54071"/>
    </source>
</evidence>
<evidence type="ECO:0000250" key="4">
    <source>
        <dbReference type="UniProtKB" id="P56574"/>
    </source>
</evidence>
<evidence type="ECO:0000269" key="5">
    <source>
    </source>
</evidence>
<evidence type="ECO:0000269" key="6">
    <source>
    </source>
</evidence>
<evidence type="ECO:0000269" key="7">
    <source>
    </source>
</evidence>
<evidence type="ECO:0000269" key="8">
    <source>
    </source>
</evidence>
<evidence type="ECO:0000269" key="9">
    <source>
    </source>
</evidence>
<evidence type="ECO:0000303" key="10">
    <source>
    </source>
</evidence>
<evidence type="ECO:0000305" key="11"/>
<evidence type="ECO:0000305" key="12">
    <source>
    </source>
</evidence>
<evidence type="ECO:0007744" key="13">
    <source>
    </source>
</evidence>
<evidence type="ECO:0007829" key="14">
    <source>
        <dbReference type="PDB" id="5I95"/>
    </source>
</evidence>
<keyword id="KW-0002">3D-structure</keyword>
<keyword id="KW-0007">Acetylation</keyword>
<keyword id="KW-0025">Alternative splicing</keyword>
<keyword id="KW-0225">Disease variant</keyword>
<keyword id="KW-0329">Glyoxylate bypass</keyword>
<keyword id="KW-0460">Magnesium</keyword>
<keyword id="KW-0464">Manganese</keyword>
<keyword id="KW-0479">Metal-binding</keyword>
<keyword id="KW-0496">Mitochondrion</keyword>
<keyword id="KW-0521">NADP</keyword>
<keyword id="KW-0560">Oxidoreductase</keyword>
<keyword id="KW-1267">Proteomics identification</keyword>
<keyword id="KW-1185">Reference proteome</keyword>
<keyword id="KW-0809">Transit peptide</keyword>
<keyword id="KW-0816">Tricarboxylic acid cycle</keyword>
<organism>
    <name type="scientific">Homo sapiens</name>
    <name type="common">Human</name>
    <dbReference type="NCBI Taxonomy" id="9606"/>
    <lineage>
        <taxon>Eukaryota</taxon>
        <taxon>Metazoa</taxon>
        <taxon>Chordata</taxon>
        <taxon>Craniata</taxon>
        <taxon>Vertebrata</taxon>
        <taxon>Euteleostomi</taxon>
        <taxon>Mammalia</taxon>
        <taxon>Eutheria</taxon>
        <taxon>Euarchontoglires</taxon>
        <taxon>Primates</taxon>
        <taxon>Haplorrhini</taxon>
        <taxon>Catarrhini</taxon>
        <taxon>Hominidae</taxon>
        <taxon>Homo</taxon>
    </lineage>
</organism>
<comment type="function">
    <text evidence="5 7">Plays a role in intermediary metabolism and energy production (PubMed:19228619, PubMed:22416140). It may tightly associate or interact with the pyruvate dehydrogenase complex (PubMed:19228619, PubMed:22416140).</text>
</comment>
<comment type="catalytic activity">
    <reaction evidence="7 12">
        <text>D-threo-isocitrate + NADP(+) = 2-oxoglutarate + CO2 + NADPH</text>
        <dbReference type="Rhea" id="RHEA:19629"/>
        <dbReference type="ChEBI" id="CHEBI:15562"/>
        <dbReference type="ChEBI" id="CHEBI:16526"/>
        <dbReference type="ChEBI" id="CHEBI:16810"/>
        <dbReference type="ChEBI" id="CHEBI:57783"/>
        <dbReference type="ChEBI" id="CHEBI:58349"/>
        <dbReference type="EC" id="1.1.1.42"/>
    </reaction>
</comment>
<comment type="cofactor">
    <cofactor evidence="2">
        <name>Mg(2+)</name>
        <dbReference type="ChEBI" id="CHEBI:18420"/>
    </cofactor>
    <cofactor evidence="2">
        <name>Mn(2+)</name>
        <dbReference type="ChEBI" id="CHEBI:29035"/>
    </cofactor>
    <text evidence="2">Binds 1 Mg(2+) or Mn(2+) ion per subunit.</text>
</comment>
<comment type="biophysicochemical properties">
    <kinetics>
        <KM evidence="7">3.1 uM for NADP</KM>
        <KM evidence="7">6 uM for isocitrate</KM>
        <Vmax evidence="7">42.1 umol/min/mg enzyme for NADP</Vmax>
        <Vmax evidence="7">43.4 umol/min/mg enzyme for isocitrate</Vmax>
    </kinetics>
</comment>
<comment type="subunit">
    <text evidence="2">Homodimer.</text>
</comment>
<comment type="subcellular location">
    <subcellularLocation>
        <location evidence="2">Mitochondrion</location>
    </subcellularLocation>
</comment>
<comment type="alternative products">
    <event type="alternative splicing"/>
    <isoform>
        <id>P48735-1</id>
        <name>1</name>
        <sequence type="displayed"/>
    </isoform>
    <isoform>
        <id>P48735-2</id>
        <name>2</name>
        <sequence type="described" ref="VSP_056278"/>
    </isoform>
</comment>
<comment type="PTM">
    <text evidence="7">Acetylation at Lys-413 dramatically reduces catalytic activity. Deacetylated by SIRT3.</text>
</comment>
<comment type="disease" evidence="6">
    <disease id="DI-02980">
        <name>D-2-hydroxyglutaric aciduria 2</name>
        <acronym>D2HGA2</acronym>
        <description>A neurometabolic disorder causing developmental delay, epilepsy, hypotonia, and dysmorphic features. Both a mild and a severe phenotype exist. The severe phenotype is homogeneous and is characterized by early infantile-onset epileptic encephalopathy and cardiomyopathy. The mild phenotype has a more variable clinical presentation. Diagnosis is based on the presence of an excess of D-2-hydroxyglutaric acid in the urine.</description>
        <dbReference type="MIM" id="613657"/>
    </disease>
    <text>The disease is caused by variants affecting the gene represented in this entry.</text>
</comment>
<comment type="disease" evidence="5 8">
    <disease id="DI-02566">
        <name>Glioma</name>
        <acronym>GLM</acronym>
        <description>Gliomas are benign or malignant central nervous system neoplasms derived from glial cells. They comprise astrocytomas and glioblastoma multiforme that are derived from astrocytes, oligodendrogliomas derived from oligodendrocytes and ependymomas derived from ependymocytes.</description>
        <dbReference type="MIM" id="137800"/>
    </disease>
    <text>The gene represented in this entry is involved in disease pathogenesis.</text>
</comment>
<comment type="disease">
    <text evidence="9">enetic variations are associated with cartilaginous tumors such as enchondroma or chondrosarcoma.</text>
</comment>
<comment type="similarity">
    <text evidence="11">Belongs to the isocitrate and isopropylmalate dehydrogenases family.</text>
</comment>
<accession>P48735</accession>
<accession>B2R6L6</accession>
<accession>B4DFL2</accession>
<accession>Q96GT3</accession>
<reference key="1">
    <citation type="submission" date="1992-11" db="EMBL/GenBank/DDBJ databases">
        <authorList>
            <person name="Huh T.-L."/>
            <person name="Oh I.-U."/>
            <person name="Kim Y.O."/>
            <person name="Huh J.-W."/>
            <person name="Song B.J."/>
        </authorList>
    </citation>
    <scope>NUCLEOTIDE SEQUENCE [MRNA] (ISOFORM 1)</scope>
    <source>
        <tissue>Heart</tissue>
    </source>
</reference>
<reference key="2">
    <citation type="journal article" date="2004" name="Nat. Genet.">
        <title>Complete sequencing and characterization of 21,243 full-length human cDNAs.</title>
        <authorList>
            <person name="Ota T."/>
            <person name="Suzuki Y."/>
            <person name="Nishikawa T."/>
            <person name="Otsuki T."/>
            <person name="Sugiyama T."/>
            <person name="Irie R."/>
            <person name="Wakamatsu A."/>
            <person name="Hayashi K."/>
            <person name="Sato H."/>
            <person name="Nagai K."/>
            <person name="Kimura K."/>
            <person name="Makita H."/>
            <person name="Sekine M."/>
            <person name="Obayashi M."/>
            <person name="Nishi T."/>
            <person name="Shibahara T."/>
            <person name="Tanaka T."/>
            <person name="Ishii S."/>
            <person name="Yamamoto J."/>
            <person name="Saito K."/>
            <person name="Kawai Y."/>
            <person name="Isono Y."/>
            <person name="Nakamura Y."/>
            <person name="Nagahari K."/>
            <person name="Murakami K."/>
            <person name="Yasuda T."/>
            <person name="Iwayanagi T."/>
            <person name="Wagatsuma M."/>
            <person name="Shiratori A."/>
            <person name="Sudo H."/>
            <person name="Hosoiri T."/>
            <person name="Kaku Y."/>
            <person name="Kodaira H."/>
            <person name="Kondo H."/>
            <person name="Sugawara M."/>
            <person name="Takahashi M."/>
            <person name="Kanda K."/>
            <person name="Yokoi T."/>
            <person name="Furuya T."/>
            <person name="Kikkawa E."/>
            <person name="Omura Y."/>
            <person name="Abe K."/>
            <person name="Kamihara K."/>
            <person name="Katsuta N."/>
            <person name="Sato K."/>
            <person name="Tanikawa M."/>
            <person name="Yamazaki M."/>
            <person name="Ninomiya K."/>
            <person name="Ishibashi T."/>
            <person name="Yamashita H."/>
            <person name="Murakawa K."/>
            <person name="Fujimori K."/>
            <person name="Tanai H."/>
            <person name="Kimata M."/>
            <person name="Watanabe M."/>
            <person name="Hiraoka S."/>
            <person name="Chiba Y."/>
            <person name="Ishida S."/>
            <person name="Ono Y."/>
            <person name="Takiguchi S."/>
            <person name="Watanabe S."/>
            <person name="Yosida M."/>
            <person name="Hotuta T."/>
            <person name="Kusano J."/>
            <person name="Kanehori K."/>
            <person name="Takahashi-Fujii A."/>
            <person name="Hara H."/>
            <person name="Tanase T.-O."/>
            <person name="Nomura Y."/>
            <person name="Togiya S."/>
            <person name="Komai F."/>
            <person name="Hara R."/>
            <person name="Takeuchi K."/>
            <person name="Arita M."/>
            <person name="Imose N."/>
            <person name="Musashino K."/>
            <person name="Yuuki H."/>
            <person name="Oshima A."/>
            <person name="Sasaki N."/>
            <person name="Aotsuka S."/>
            <person name="Yoshikawa Y."/>
            <person name="Matsunawa H."/>
            <person name="Ichihara T."/>
            <person name="Shiohata N."/>
            <person name="Sano S."/>
            <person name="Moriya S."/>
            <person name="Momiyama H."/>
            <person name="Satoh N."/>
            <person name="Takami S."/>
            <person name="Terashima Y."/>
            <person name="Suzuki O."/>
            <person name="Nakagawa S."/>
            <person name="Senoh A."/>
            <person name="Mizoguchi H."/>
            <person name="Goto Y."/>
            <person name="Shimizu F."/>
            <person name="Wakebe H."/>
            <person name="Hishigaki H."/>
            <person name="Watanabe T."/>
            <person name="Sugiyama A."/>
            <person name="Takemoto M."/>
            <person name="Kawakami B."/>
            <person name="Yamazaki M."/>
            <person name="Watanabe K."/>
            <person name="Kumagai A."/>
            <person name="Itakura S."/>
            <person name="Fukuzumi Y."/>
            <person name="Fujimori Y."/>
            <person name="Komiyama M."/>
            <person name="Tashiro H."/>
            <person name="Tanigami A."/>
            <person name="Fujiwara T."/>
            <person name="Ono T."/>
            <person name="Yamada K."/>
            <person name="Fujii Y."/>
            <person name="Ozaki K."/>
            <person name="Hirao M."/>
            <person name="Ohmori Y."/>
            <person name="Kawabata A."/>
            <person name="Hikiji T."/>
            <person name="Kobatake N."/>
            <person name="Inagaki H."/>
            <person name="Ikema Y."/>
            <person name="Okamoto S."/>
            <person name="Okitani R."/>
            <person name="Kawakami T."/>
            <person name="Noguchi S."/>
            <person name="Itoh T."/>
            <person name="Shigeta K."/>
            <person name="Senba T."/>
            <person name="Matsumura K."/>
            <person name="Nakajima Y."/>
            <person name="Mizuno T."/>
            <person name="Morinaga M."/>
            <person name="Sasaki M."/>
            <person name="Togashi T."/>
            <person name="Oyama M."/>
            <person name="Hata H."/>
            <person name="Watanabe M."/>
            <person name="Komatsu T."/>
            <person name="Mizushima-Sugano J."/>
            <person name="Satoh T."/>
            <person name="Shirai Y."/>
            <person name="Takahashi Y."/>
            <person name="Nakagawa K."/>
            <person name="Okumura K."/>
            <person name="Nagase T."/>
            <person name="Nomura N."/>
            <person name="Kikuchi H."/>
            <person name="Masuho Y."/>
            <person name="Yamashita R."/>
            <person name="Nakai K."/>
            <person name="Yada T."/>
            <person name="Nakamura Y."/>
            <person name="Ohara O."/>
            <person name="Isogai T."/>
            <person name="Sugano S."/>
        </authorList>
    </citation>
    <scope>NUCLEOTIDE SEQUENCE [LARGE SCALE MRNA] (ISOFORMS 1 AND 2)</scope>
    <source>
        <tissue>Brain cortex</tissue>
        <tissue>Heart</tissue>
        <tissue>Testis</tissue>
    </source>
</reference>
<reference key="3">
    <citation type="journal article" date="2006" name="Nature">
        <title>Analysis of the DNA sequence and duplication history of human chromosome 15.</title>
        <authorList>
            <person name="Zody M.C."/>
            <person name="Garber M."/>
            <person name="Sharpe T."/>
            <person name="Young S.K."/>
            <person name="Rowen L."/>
            <person name="O'Neill K."/>
            <person name="Whittaker C.A."/>
            <person name="Kamal M."/>
            <person name="Chang J.L."/>
            <person name="Cuomo C.A."/>
            <person name="Dewar K."/>
            <person name="FitzGerald M.G."/>
            <person name="Kodira C.D."/>
            <person name="Madan A."/>
            <person name="Qin S."/>
            <person name="Yang X."/>
            <person name="Abbasi N."/>
            <person name="Abouelleil A."/>
            <person name="Arachchi H.M."/>
            <person name="Baradarani L."/>
            <person name="Birditt B."/>
            <person name="Bloom S."/>
            <person name="Bloom T."/>
            <person name="Borowsky M.L."/>
            <person name="Burke J."/>
            <person name="Butler J."/>
            <person name="Cook A."/>
            <person name="DeArellano K."/>
            <person name="DeCaprio D."/>
            <person name="Dorris L. III"/>
            <person name="Dors M."/>
            <person name="Eichler E.E."/>
            <person name="Engels R."/>
            <person name="Fahey J."/>
            <person name="Fleetwood P."/>
            <person name="Friedman C."/>
            <person name="Gearin G."/>
            <person name="Hall J.L."/>
            <person name="Hensley G."/>
            <person name="Johnson E."/>
            <person name="Jones C."/>
            <person name="Kamat A."/>
            <person name="Kaur A."/>
            <person name="Locke D.P."/>
            <person name="Madan A."/>
            <person name="Munson G."/>
            <person name="Jaffe D.B."/>
            <person name="Lui A."/>
            <person name="Macdonald P."/>
            <person name="Mauceli E."/>
            <person name="Naylor J.W."/>
            <person name="Nesbitt R."/>
            <person name="Nicol R."/>
            <person name="O'Leary S.B."/>
            <person name="Ratcliffe A."/>
            <person name="Rounsley S."/>
            <person name="She X."/>
            <person name="Sneddon K.M.B."/>
            <person name="Stewart S."/>
            <person name="Sougnez C."/>
            <person name="Stone S.M."/>
            <person name="Topham K."/>
            <person name="Vincent D."/>
            <person name="Wang S."/>
            <person name="Zimmer A.R."/>
            <person name="Birren B.W."/>
            <person name="Hood L."/>
            <person name="Lander E.S."/>
            <person name="Nusbaum C."/>
        </authorList>
    </citation>
    <scope>NUCLEOTIDE SEQUENCE [LARGE SCALE GENOMIC DNA]</scope>
</reference>
<reference key="4">
    <citation type="submission" date="2005-07" db="EMBL/GenBank/DDBJ databases">
        <authorList>
            <person name="Mural R.J."/>
            <person name="Istrail S."/>
            <person name="Sutton G.G."/>
            <person name="Florea L."/>
            <person name="Halpern A.L."/>
            <person name="Mobarry C.M."/>
            <person name="Lippert R."/>
            <person name="Walenz B."/>
            <person name="Shatkay H."/>
            <person name="Dew I."/>
            <person name="Miller J.R."/>
            <person name="Flanigan M.J."/>
            <person name="Edwards N.J."/>
            <person name="Bolanos R."/>
            <person name="Fasulo D."/>
            <person name="Halldorsson B.V."/>
            <person name="Hannenhalli S."/>
            <person name="Turner R."/>
            <person name="Yooseph S."/>
            <person name="Lu F."/>
            <person name="Nusskern D.R."/>
            <person name="Shue B.C."/>
            <person name="Zheng X.H."/>
            <person name="Zhong F."/>
            <person name="Delcher A.L."/>
            <person name="Huson D.H."/>
            <person name="Kravitz S.A."/>
            <person name="Mouchard L."/>
            <person name="Reinert K."/>
            <person name="Remington K.A."/>
            <person name="Clark A.G."/>
            <person name="Waterman M.S."/>
            <person name="Eichler E.E."/>
            <person name="Adams M.D."/>
            <person name="Hunkapiller M.W."/>
            <person name="Myers E.W."/>
            <person name="Venter J.C."/>
        </authorList>
    </citation>
    <scope>NUCLEOTIDE SEQUENCE [LARGE SCALE GENOMIC DNA]</scope>
</reference>
<reference key="5">
    <citation type="journal article" date="2004" name="Genome Res.">
        <title>The status, quality, and expansion of the NIH full-length cDNA project: the Mammalian Gene Collection (MGC).</title>
        <authorList>
            <consortium name="The MGC Project Team"/>
        </authorList>
    </citation>
    <scope>NUCLEOTIDE SEQUENCE [LARGE SCALE MRNA] (ISOFORM 1)</scope>
    <source>
        <tissue>Colon</tissue>
        <tissue>Skin</tissue>
    </source>
</reference>
<reference key="6">
    <citation type="journal article" date="2009" name="Science">
        <title>Lysine acetylation targets protein complexes and co-regulates major cellular functions.</title>
        <authorList>
            <person name="Choudhary C."/>
            <person name="Kumar C."/>
            <person name="Gnad F."/>
            <person name="Nielsen M.L."/>
            <person name="Rehman M."/>
            <person name="Walther T.C."/>
            <person name="Olsen J.V."/>
            <person name="Mann M."/>
        </authorList>
    </citation>
    <scope>ACETYLATION [LARGE SCALE ANALYSIS] AT LYS-67; LYS-106; LYS-155; LYS-166; LYS-180; LYS-256; LYS-263; LYS-272; LYS-275; LYS-282 AND LYS-442</scope>
    <scope>IDENTIFICATION BY MASS SPECTROMETRY [LARGE SCALE ANALYSIS]</scope>
</reference>
<reference key="7">
    <citation type="journal article" date="2011" name="BMC Syst. Biol.">
        <title>Initial characterization of the human central proteome.</title>
        <authorList>
            <person name="Burkard T.R."/>
            <person name="Planyavsky M."/>
            <person name="Kaupe I."/>
            <person name="Breitwieser F.P."/>
            <person name="Buerckstuemmer T."/>
            <person name="Bennett K.L."/>
            <person name="Superti-Furga G."/>
            <person name="Colinge J."/>
        </authorList>
    </citation>
    <scope>IDENTIFICATION BY MASS SPECTROMETRY [LARGE SCALE ANALYSIS]</scope>
</reference>
<reference key="8">
    <citation type="journal article" date="2012" name="J. Biol. Chem.">
        <title>SIRT3 protein deacetylates isocitrate dehydrogenase 2 (IDH2) and regulates mitochondrial redox status.</title>
        <authorList>
            <person name="Yu W."/>
            <person name="Dittenhafer-Reed K.E."/>
            <person name="Denu J.M."/>
        </authorList>
    </citation>
    <scope>FUNCTION</scope>
    <scope>CATALYTIC ACTIVITY</scope>
    <scope>ACETYLATION AT LYS-413</scope>
    <scope>MUTAGENESIS OF LYS-413</scope>
    <scope>BIOPHYSICOCHEMICAL PROPERTIES</scope>
</reference>
<reference key="9">
    <citation type="journal article" date="2014" name="J. Proteomics">
        <title>An enzyme assisted RP-RPLC approach for in-depth analysis of human liver phosphoproteome.</title>
        <authorList>
            <person name="Bian Y."/>
            <person name="Song C."/>
            <person name="Cheng K."/>
            <person name="Dong M."/>
            <person name="Wang F."/>
            <person name="Huang J."/>
            <person name="Sun D."/>
            <person name="Wang L."/>
            <person name="Ye M."/>
            <person name="Zou H."/>
        </authorList>
    </citation>
    <scope>IDENTIFICATION BY MASS SPECTROMETRY [LARGE SCALE ANALYSIS]</scope>
    <source>
        <tissue>Liver</tissue>
    </source>
</reference>
<reference key="10">
    <citation type="journal article" date="2015" name="Proteomics">
        <title>N-terminome analysis of the human mitochondrial proteome.</title>
        <authorList>
            <person name="Vaca Jacome A.S."/>
            <person name="Rabilloud T."/>
            <person name="Schaeffer-Reiss C."/>
            <person name="Rompais M."/>
            <person name="Ayoub D."/>
            <person name="Lane L."/>
            <person name="Bairoch A."/>
            <person name="Van Dorsselaer A."/>
            <person name="Carapito C."/>
        </authorList>
    </citation>
    <scope>IDENTIFICATION BY MASS SPECTROMETRY [LARGE SCALE ANALYSIS]</scope>
</reference>
<reference key="11">
    <citation type="journal article" date="2009" name="N. Engl. J. Med.">
        <title>IDH1 and IDH2 mutations in gliomas.</title>
        <authorList>
            <person name="Yan H."/>
            <person name="Parsons D.W."/>
            <person name="Jin G."/>
            <person name="McLendon R."/>
            <person name="Rasheed B.A."/>
            <person name="Yuan W."/>
            <person name="Kos I."/>
            <person name="Batinic-Haberle I."/>
            <person name="Jones S."/>
            <person name="Riggins G.J."/>
            <person name="Friedman H."/>
            <person name="Friedman A."/>
            <person name="Reardon D."/>
            <person name="Herndon J."/>
            <person name="Kinzler K.W."/>
            <person name="Velculescu V.E."/>
            <person name="Vogelstein B."/>
            <person name="Bigner D.D."/>
        </authorList>
    </citation>
    <scope>VARIANTS GLM GLY-172; LYS-172 AND MET-172</scope>
    <scope>FUNCTION</scope>
    <scope>CATALYTIC ACTIVITY</scope>
    <scope>CHARACTERIZATION OF VARIANTS GLM GLY-172; LYS-172 AND MET-172</scope>
</reference>
<reference key="12">
    <citation type="journal article" date="2010" name="Science">
        <title>IDH2 mutations in patients with D-2-hydroxyglutaric aciduria.</title>
        <authorList>
            <person name="Kranendijk M."/>
            <person name="Struys E.A."/>
            <person name="van Schaftingen E."/>
            <person name="Gibson K.M."/>
            <person name="Kanhai W.A."/>
            <person name="van der Knaap M.S."/>
            <person name="Amiel J."/>
            <person name="Buist N.R."/>
            <person name="Das A.M."/>
            <person name="de Klerk J.B."/>
            <person name="Feigenbaum A.S."/>
            <person name="Grange D.K."/>
            <person name="Hofstede F.C."/>
            <person name="Holme E."/>
            <person name="Kirk E.P."/>
            <person name="Korman S.H."/>
            <person name="Morava E."/>
            <person name="Morris A."/>
            <person name="Smeitink J."/>
            <person name="Sukhai R.N."/>
            <person name="Vallance H."/>
            <person name="Jakobs C."/>
            <person name="Salomons G.S."/>
        </authorList>
    </citation>
    <scope>VARIANTS D2HGA2 GLN-140 AND GLY-140</scope>
</reference>
<reference key="13">
    <citation type="journal article" date="2015" name="Neuropathology">
        <title>IDH2 mutation in gliomas including novel mutation.</title>
        <authorList>
            <person name="Koh J."/>
            <person name="Cho H."/>
            <person name="Kim H."/>
            <person name="Kim S.I."/>
            <person name="Yun S."/>
            <person name="Park C.K."/>
            <person name="Lee S.H."/>
            <person name="Choi S.H."/>
            <person name="Park S.H."/>
        </authorList>
    </citation>
    <scope>VARIANTS GLM LEU-158; SER-162 AND LYS-172</scope>
</reference>
<reference key="14">
    <citation type="journal article" date="2015" name="PLoS ONE">
        <title>Mutant IDH1 Dysregulates the Differentiation of Mesenchymal Stem Cells in Association with Gene-Specific Histone Modifications to Cartilage- and Bone-Related Genes.</title>
        <authorList>
            <person name="Jin Y."/>
            <person name="Elalaf H."/>
            <person name="Watanabe M."/>
            <person name="Tamaki S."/>
            <person name="Hineno S."/>
            <person name="Matsunaga K."/>
            <person name="Woltjen K."/>
            <person name="Kobayashi Y."/>
            <person name="Nagata S."/>
            <person name="Ikeya M."/>
            <person name="Kato T. Jr."/>
            <person name="Okamoto T."/>
            <person name="Matsuda S."/>
            <person name="Toguchida J."/>
        </authorList>
    </citation>
    <scope>VARIANTS SER-172; THR-172 AND TRP-172</scope>
    <scope>INVOLVEMENT IN DISEASE</scope>
</reference>
<protein>
    <recommendedName>
        <fullName>Isocitrate dehydrogenase [NADP], mitochondrial</fullName>
        <shortName>IDH</shortName>
        <ecNumber evidence="7 12">1.1.1.42</ecNumber>
    </recommendedName>
    <alternativeName>
        <fullName>ICD-M</fullName>
    </alternativeName>
    <alternativeName>
        <fullName>IDP</fullName>
    </alternativeName>
    <alternativeName>
        <fullName>NADP(+)-specific ICDH</fullName>
    </alternativeName>
    <alternativeName>
        <fullName>Oxalosuccinate decarboxylase</fullName>
    </alternativeName>
</protein>
<sequence length="452" mass="50909">MAGYLRVVRSLCRASGSRPAWAPAALTAPTSQEQPRRHYADKRIKVAKPVVEMDGDEMTRIIWQFIKEKLILPHVDIQLKYFDLGLPNRDQTDDQVTIDSALATQKYSVAVKCATITPDEARVEEFKLKKMWKSPNGTIRNILGGTVFREPIICKNIPRLVPGWTKPITIGRHAHGDQYKATDFVADRAGTFKMVFTPKDGSGVKEWEVYNFPAGGVGMGMYNTDESISGFAHSCFQYAIQKKWPLYMSTKNTILKAYDGRFKDIFQEIFDKHYKTDFDKNKIWYEHRLIDDMVAQVLKSSGGFVWACKNYDGDVQSDILAQGFGSLGLMTSVLVCPDGKTIEAEAAHGTVTRHYREHQKGRPTSTNPIASIFAWTRGLEHRGKLDGNQDLIRFAQMLEKVCVETVESGAMTKDLAGCIHGLSNVKLNEHFLNTTDFLDTIKSNLDRALGRQ</sequence>
<gene>
    <name type="primary">IDH2</name>
</gene>
<name>IDHP_HUMAN</name>